<protein>
    <recommendedName>
        <fullName evidence="1">Uridylate kinase</fullName>
        <shortName evidence="1">UK</shortName>
        <ecNumber evidence="1">2.7.4.22</ecNumber>
    </recommendedName>
    <alternativeName>
        <fullName evidence="1">Uridine monophosphate kinase</fullName>
        <shortName evidence="1">UMP kinase</shortName>
        <shortName evidence="1">UMPK</shortName>
    </alternativeName>
</protein>
<sequence>MKYKRVLLKLSGEFLTRNGFGIEPEATQALAREIKAAYDTGVQLAIVIGAGNLWRGARQGVGMDRATADYIGMLATIMNALALQDALESLGVPTRVQTALTITQVAEPYIRRRALRHLEKERIVIFGGGTGNPFFSTDTAAALRALEVGAEVVLMAKNKVDGVYSDDPRKNPEAVRFDELTYLEVLNRGLQVMDTTAITLCMEAGLPIVVFDIFKPGALVGIIQGEKVGTLIH</sequence>
<feature type="chain" id="PRO_1000054046" description="Uridylate kinase">
    <location>
        <begin position="1"/>
        <end position="233"/>
    </location>
</feature>
<feature type="binding site" evidence="1">
    <location>
        <begin position="9"/>
        <end position="12"/>
    </location>
    <ligand>
        <name>ATP</name>
        <dbReference type="ChEBI" id="CHEBI:30616"/>
    </ligand>
</feature>
<feature type="binding site" evidence="1">
    <location>
        <position position="51"/>
    </location>
    <ligand>
        <name>ATP</name>
        <dbReference type="ChEBI" id="CHEBI:30616"/>
    </ligand>
</feature>
<feature type="binding site" evidence="1">
    <location>
        <position position="55"/>
    </location>
    <ligand>
        <name>ATP</name>
        <dbReference type="ChEBI" id="CHEBI:30616"/>
    </ligand>
</feature>
<feature type="binding site" evidence="1">
    <location>
        <position position="69"/>
    </location>
    <ligand>
        <name>UMP</name>
        <dbReference type="ChEBI" id="CHEBI:57865"/>
    </ligand>
</feature>
<feature type="binding site" evidence="1">
    <location>
        <begin position="130"/>
        <end position="137"/>
    </location>
    <ligand>
        <name>UMP</name>
        <dbReference type="ChEBI" id="CHEBI:57865"/>
    </ligand>
</feature>
<feature type="binding site" evidence="1">
    <location>
        <position position="158"/>
    </location>
    <ligand>
        <name>ATP</name>
        <dbReference type="ChEBI" id="CHEBI:30616"/>
    </ligand>
</feature>
<feature type="binding site" evidence="1">
    <location>
        <position position="164"/>
    </location>
    <ligand>
        <name>ATP</name>
        <dbReference type="ChEBI" id="CHEBI:30616"/>
    </ligand>
</feature>
<feature type="binding site" evidence="1">
    <location>
        <position position="167"/>
    </location>
    <ligand>
        <name>ATP</name>
        <dbReference type="ChEBI" id="CHEBI:30616"/>
    </ligand>
</feature>
<name>PYRH_THET2</name>
<evidence type="ECO:0000255" key="1">
    <source>
        <dbReference type="HAMAP-Rule" id="MF_01220"/>
    </source>
</evidence>
<comment type="function">
    <text evidence="1">Catalyzes the reversible phosphorylation of UMP to UDP.</text>
</comment>
<comment type="catalytic activity">
    <reaction evidence="1">
        <text>UMP + ATP = UDP + ADP</text>
        <dbReference type="Rhea" id="RHEA:24400"/>
        <dbReference type="ChEBI" id="CHEBI:30616"/>
        <dbReference type="ChEBI" id="CHEBI:57865"/>
        <dbReference type="ChEBI" id="CHEBI:58223"/>
        <dbReference type="ChEBI" id="CHEBI:456216"/>
        <dbReference type="EC" id="2.7.4.22"/>
    </reaction>
</comment>
<comment type="activity regulation">
    <text evidence="1">Inhibited by UTP.</text>
</comment>
<comment type="pathway">
    <text evidence="1">Pyrimidine metabolism; CTP biosynthesis via de novo pathway; UDP from UMP (UMPK route): step 1/1.</text>
</comment>
<comment type="subunit">
    <text evidence="1">Homohexamer.</text>
</comment>
<comment type="subcellular location">
    <subcellularLocation>
        <location evidence="1">Cytoplasm</location>
    </subcellularLocation>
</comment>
<comment type="similarity">
    <text evidence="1">Belongs to the UMP kinase family.</text>
</comment>
<organism>
    <name type="scientific">Thermus thermophilus (strain ATCC BAA-163 / DSM 7039 / HB27)</name>
    <dbReference type="NCBI Taxonomy" id="262724"/>
    <lineage>
        <taxon>Bacteria</taxon>
        <taxon>Thermotogati</taxon>
        <taxon>Deinococcota</taxon>
        <taxon>Deinococci</taxon>
        <taxon>Thermales</taxon>
        <taxon>Thermaceae</taxon>
        <taxon>Thermus</taxon>
    </lineage>
</organism>
<dbReference type="EC" id="2.7.4.22" evidence="1"/>
<dbReference type="EMBL" id="AE017221">
    <property type="protein sequence ID" value="AAS80855.1"/>
    <property type="molecule type" value="Genomic_DNA"/>
</dbReference>
<dbReference type="RefSeq" id="WP_011172952.1">
    <property type="nucleotide sequence ID" value="NC_005835.1"/>
</dbReference>
<dbReference type="SMR" id="Q72KD9"/>
<dbReference type="GeneID" id="3170118"/>
<dbReference type="KEGG" id="tth:TT_C0507"/>
<dbReference type="eggNOG" id="COG0528">
    <property type="taxonomic scope" value="Bacteria"/>
</dbReference>
<dbReference type="HOGENOM" id="CLU_033861_0_0_0"/>
<dbReference type="OrthoDB" id="9807458at2"/>
<dbReference type="UniPathway" id="UPA00159">
    <property type="reaction ID" value="UER00275"/>
</dbReference>
<dbReference type="Proteomes" id="UP000000592">
    <property type="component" value="Chromosome"/>
</dbReference>
<dbReference type="GO" id="GO:0005737">
    <property type="term" value="C:cytoplasm"/>
    <property type="evidence" value="ECO:0007669"/>
    <property type="project" value="UniProtKB-SubCell"/>
</dbReference>
<dbReference type="GO" id="GO:0005524">
    <property type="term" value="F:ATP binding"/>
    <property type="evidence" value="ECO:0007669"/>
    <property type="project" value="UniProtKB-KW"/>
</dbReference>
<dbReference type="GO" id="GO:0033862">
    <property type="term" value="F:UMP kinase activity"/>
    <property type="evidence" value="ECO:0007669"/>
    <property type="project" value="UniProtKB-EC"/>
</dbReference>
<dbReference type="GO" id="GO:0044210">
    <property type="term" value="P:'de novo' CTP biosynthetic process"/>
    <property type="evidence" value="ECO:0007669"/>
    <property type="project" value="UniProtKB-UniRule"/>
</dbReference>
<dbReference type="GO" id="GO:0006225">
    <property type="term" value="P:UDP biosynthetic process"/>
    <property type="evidence" value="ECO:0007669"/>
    <property type="project" value="TreeGrafter"/>
</dbReference>
<dbReference type="CDD" id="cd04254">
    <property type="entry name" value="AAK_UMPK-PyrH-Ec"/>
    <property type="match status" value="1"/>
</dbReference>
<dbReference type="FunFam" id="3.40.1160.10:FF:000001">
    <property type="entry name" value="Uridylate kinase"/>
    <property type="match status" value="1"/>
</dbReference>
<dbReference type="Gene3D" id="3.40.1160.10">
    <property type="entry name" value="Acetylglutamate kinase-like"/>
    <property type="match status" value="1"/>
</dbReference>
<dbReference type="HAMAP" id="MF_01220_B">
    <property type="entry name" value="PyrH_B"/>
    <property type="match status" value="1"/>
</dbReference>
<dbReference type="InterPro" id="IPR036393">
    <property type="entry name" value="AceGlu_kinase-like_sf"/>
</dbReference>
<dbReference type="InterPro" id="IPR001048">
    <property type="entry name" value="Asp/Glu/Uridylate_kinase"/>
</dbReference>
<dbReference type="InterPro" id="IPR011817">
    <property type="entry name" value="Uridylate_kinase"/>
</dbReference>
<dbReference type="InterPro" id="IPR015963">
    <property type="entry name" value="Uridylate_kinase_bac"/>
</dbReference>
<dbReference type="NCBIfam" id="TIGR02075">
    <property type="entry name" value="pyrH_bact"/>
    <property type="match status" value="1"/>
</dbReference>
<dbReference type="PANTHER" id="PTHR42833">
    <property type="entry name" value="URIDYLATE KINASE"/>
    <property type="match status" value="1"/>
</dbReference>
<dbReference type="PANTHER" id="PTHR42833:SF4">
    <property type="entry name" value="URIDYLATE KINASE PUMPKIN, CHLOROPLASTIC"/>
    <property type="match status" value="1"/>
</dbReference>
<dbReference type="Pfam" id="PF00696">
    <property type="entry name" value="AA_kinase"/>
    <property type="match status" value="1"/>
</dbReference>
<dbReference type="PIRSF" id="PIRSF005650">
    <property type="entry name" value="Uridylate_kin"/>
    <property type="match status" value="1"/>
</dbReference>
<dbReference type="SUPFAM" id="SSF53633">
    <property type="entry name" value="Carbamate kinase-like"/>
    <property type="match status" value="1"/>
</dbReference>
<accession>Q72KD9</accession>
<reference key="1">
    <citation type="journal article" date="2004" name="Nat. Biotechnol.">
        <title>The genome sequence of the extreme thermophile Thermus thermophilus.</title>
        <authorList>
            <person name="Henne A."/>
            <person name="Brueggemann H."/>
            <person name="Raasch C."/>
            <person name="Wiezer A."/>
            <person name="Hartsch T."/>
            <person name="Liesegang H."/>
            <person name="Johann A."/>
            <person name="Lienard T."/>
            <person name="Gohl O."/>
            <person name="Martinez-Arias R."/>
            <person name="Jacobi C."/>
            <person name="Starkuviene V."/>
            <person name="Schlenczeck S."/>
            <person name="Dencker S."/>
            <person name="Huber R."/>
            <person name="Klenk H.-P."/>
            <person name="Kramer W."/>
            <person name="Merkl R."/>
            <person name="Gottschalk G."/>
            <person name="Fritz H.-J."/>
        </authorList>
    </citation>
    <scope>NUCLEOTIDE SEQUENCE [LARGE SCALE GENOMIC DNA]</scope>
    <source>
        <strain>ATCC BAA-163 / DSM 7039 / HB27</strain>
    </source>
</reference>
<keyword id="KW-0067">ATP-binding</keyword>
<keyword id="KW-0963">Cytoplasm</keyword>
<keyword id="KW-0418">Kinase</keyword>
<keyword id="KW-0547">Nucleotide-binding</keyword>
<keyword id="KW-0665">Pyrimidine biosynthesis</keyword>
<keyword id="KW-0808">Transferase</keyword>
<gene>
    <name evidence="1" type="primary">pyrH</name>
    <name type="ordered locus">TT_C0507</name>
</gene>
<proteinExistence type="inferred from homology"/>